<keyword id="KW-0067">ATP-binding</keyword>
<keyword id="KW-0418">Kinase</keyword>
<keyword id="KW-0460">Magnesium</keyword>
<keyword id="KW-0479">Metal-binding</keyword>
<keyword id="KW-0546">Nucleotide metabolism</keyword>
<keyword id="KW-0547">Nucleotide-binding</keyword>
<keyword id="KW-0597">Phosphoprotein</keyword>
<keyword id="KW-0808">Transferase</keyword>
<name>NDK_HELAN</name>
<reference key="1">
    <citation type="online journal article" date="1997" name="Plant Gene Register">
        <title>Cloning of a nucleoside diphosphate kinase cDNA from Helianthus annuus.</title>
        <authorList>
            <person name="Grayburn W.S."/>
            <person name="Vick B.A."/>
        </authorList>
        <locator>PGR97-010</locator>
    </citation>
    <scope>NUCLEOTIDE SEQUENCE [MRNA]</scope>
    <source>
        <strain>cv. 894</strain>
    </source>
</reference>
<protein>
    <recommendedName>
        <fullName>Nucleoside diphosphate kinase</fullName>
        <shortName>NDK</shortName>
        <shortName>NDP kinase</shortName>
        <ecNumber>2.7.4.6</ecNumber>
    </recommendedName>
</protein>
<feature type="chain" id="PRO_0000137138" description="Nucleoside diphosphate kinase">
    <location>
        <begin position="1"/>
        <end position="148"/>
    </location>
</feature>
<feature type="active site" description="Pros-phosphohistidine intermediate" evidence="1">
    <location>
        <position position="115"/>
    </location>
</feature>
<feature type="binding site" evidence="1">
    <location>
        <position position="9"/>
    </location>
    <ligand>
        <name>ATP</name>
        <dbReference type="ChEBI" id="CHEBI:30616"/>
    </ligand>
</feature>
<feature type="binding site" evidence="1">
    <location>
        <position position="57"/>
    </location>
    <ligand>
        <name>ATP</name>
        <dbReference type="ChEBI" id="CHEBI:30616"/>
    </ligand>
</feature>
<feature type="binding site" evidence="1">
    <location>
        <position position="85"/>
    </location>
    <ligand>
        <name>ATP</name>
        <dbReference type="ChEBI" id="CHEBI:30616"/>
    </ligand>
</feature>
<feature type="binding site" evidence="1">
    <location>
        <position position="91"/>
    </location>
    <ligand>
        <name>ATP</name>
        <dbReference type="ChEBI" id="CHEBI:30616"/>
    </ligand>
</feature>
<feature type="binding site" evidence="1">
    <location>
        <position position="102"/>
    </location>
    <ligand>
        <name>ATP</name>
        <dbReference type="ChEBI" id="CHEBI:30616"/>
    </ligand>
</feature>
<feature type="binding site" evidence="1">
    <location>
        <position position="112"/>
    </location>
    <ligand>
        <name>ATP</name>
        <dbReference type="ChEBI" id="CHEBI:30616"/>
    </ligand>
</feature>
<dbReference type="EC" id="2.7.4.6"/>
<dbReference type="EMBL" id="U72142">
    <property type="protein sequence ID" value="AAB67996.1"/>
    <property type="molecule type" value="mRNA"/>
</dbReference>
<dbReference type="PIR" id="T14183">
    <property type="entry name" value="T14183"/>
</dbReference>
<dbReference type="SMR" id="Q96559"/>
<dbReference type="GO" id="GO:0005524">
    <property type="term" value="F:ATP binding"/>
    <property type="evidence" value="ECO:0007669"/>
    <property type="project" value="UniProtKB-KW"/>
</dbReference>
<dbReference type="GO" id="GO:0046872">
    <property type="term" value="F:metal ion binding"/>
    <property type="evidence" value="ECO:0007669"/>
    <property type="project" value="UniProtKB-KW"/>
</dbReference>
<dbReference type="GO" id="GO:0004550">
    <property type="term" value="F:nucleoside diphosphate kinase activity"/>
    <property type="evidence" value="ECO:0007669"/>
    <property type="project" value="UniProtKB-EC"/>
</dbReference>
<dbReference type="GO" id="GO:0006241">
    <property type="term" value="P:CTP biosynthetic process"/>
    <property type="evidence" value="ECO:0007669"/>
    <property type="project" value="InterPro"/>
</dbReference>
<dbReference type="GO" id="GO:0006183">
    <property type="term" value="P:GTP biosynthetic process"/>
    <property type="evidence" value="ECO:0007669"/>
    <property type="project" value="InterPro"/>
</dbReference>
<dbReference type="GO" id="GO:0006228">
    <property type="term" value="P:UTP biosynthetic process"/>
    <property type="evidence" value="ECO:0007669"/>
    <property type="project" value="InterPro"/>
</dbReference>
<dbReference type="CDD" id="cd04413">
    <property type="entry name" value="NDPk_I"/>
    <property type="match status" value="1"/>
</dbReference>
<dbReference type="FunFam" id="3.30.70.141:FF:000002">
    <property type="entry name" value="Nucleoside diphosphate kinase"/>
    <property type="match status" value="1"/>
</dbReference>
<dbReference type="Gene3D" id="3.30.70.141">
    <property type="entry name" value="Nucleoside diphosphate kinase-like domain"/>
    <property type="match status" value="1"/>
</dbReference>
<dbReference type="HAMAP" id="MF_00451">
    <property type="entry name" value="NDP_kinase"/>
    <property type="match status" value="1"/>
</dbReference>
<dbReference type="InterPro" id="IPR034907">
    <property type="entry name" value="NDK-like_dom"/>
</dbReference>
<dbReference type="InterPro" id="IPR036850">
    <property type="entry name" value="NDK-like_dom_sf"/>
</dbReference>
<dbReference type="InterPro" id="IPR001564">
    <property type="entry name" value="Nucleoside_diP_kinase"/>
</dbReference>
<dbReference type="InterPro" id="IPR023005">
    <property type="entry name" value="Nucleoside_diP_kinase_AS"/>
</dbReference>
<dbReference type="NCBIfam" id="NF001908">
    <property type="entry name" value="PRK00668.1"/>
    <property type="match status" value="1"/>
</dbReference>
<dbReference type="PANTHER" id="PTHR11349">
    <property type="entry name" value="NUCLEOSIDE DIPHOSPHATE KINASE"/>
    <property type="match status" value="1"/>
</dbReference>
<dbReference type="Pfam" id="PF00334">
    <property type="entry name" value="NDK"/>
    <property type="match status" value="1"/>
</dbReference>
<dbReference type="PRINTS" id="PR01243">
    <property type="entry name" value="NUCDPKINASE"/>
</dbReference>
<dbReference type="SMART" id="SM00562">
    <property type="entry name" value="NDK"/>
    <property type="match status" value="1"/>
</dbReference>
<dbReference type="SUPFAM" id="SSF54919">
    <property type="entry name" value="Nucleoside diphosphate kinase, NDK"/>
    <property type="match status" value="1"/>
</dbReference>
<dbReference type="PROSITE" id="PS00469">
    <property type="entry name" value="NDPK"/>
    <property type="match status" value="1"/>
</dbReference>
<dbReference type="PROSITE" id="PS51374">
    <property type="entry name" value="NDPK_LIKE"/>
    <property type="match status" value="1"/>
</dbReference>
<accession>Q96559</accession>
<proteinExistence type="evidence at transcript level"/>
<comment type="function">
    <text>Major role in the synthesis of nucleoside triphosphates other than ATP. The ATP gamma phosphate is transferred to the NDP beta phosphate via a ping-pong mechanism, using a phosphorylated active-site intermediate.</text>
</comment>
<comment type="catalytic activity">
    <reaction>
        <text>a 2'-deoxyribonucleoside 5'-diphosphate + ATP = a 2'-deoxyribonucleoside 5'-triphosphate + ADP</text>
        <dbReference type="Rhea" id="RHEA:44640"/>
        <dbReference type="ChEBI" id="CHEBI:30616"/>
        <dbReference type="ChEBI" id="CHEBI:61560"/>
        <dbReference type="ChEBI" id="CHEBI:73316"/>
        <dbReference type="ChEBI" id="CHEBI:456216"/>
        <dbReference type="EC" id="2.7.4.6"/>
    </reaction>
</comment>
<comment type="catalytic activity">
    <reaction>
        <text>a ribonucleoside 5'-diphosphate + ATP = a ribonucleoside 5'-triphosphate + ADP</text>
        <dbReference type="Rhea" id="RHEA:18113"/>
        <dbReference type="ChEBI" id="CHEBI:30616"/>
        <dbReference type="ChEBI" id="CHEBI:57930"/>
        <dbReference type="ChEBI" id="CHEBI:61557"/>
        <dbReference type="ChEBI" id="CHEBI:456216"/>
        <dbReference type="EC" id="2.7.4.6"/>
    </reaction>
</comment>
<comment type="cofactor">
    <cofactor evidence="1">
        <name>Mg(2+)</name>
        <dbReference type="ChEBI" id="CHEBI:18420"/>
    </cofactor>
</comment>
<comment type="similarity">
    <text evidence="2">Belongs to the NDK family.</text>
</comment>
<organism>
    <name type="scientific">Helianthus annuus</name>
    <name type="common">Common sunflower</name>
    <dbReference type="NCBI Taxonomy" id="4232"/>
    <lineage>
        <taxon>Eukaryota</taxon>
        <taxon>Viridiplantae</taxon>
        <taxon>Streptophyta</taxon>
        <taxon>Embryophyta</taxon>
        <taxon>Tracheophyta</taxon>
        <taxon>Spermatophyta</taxon>
        <taxon>Magnoliopsida</taxon>
        <taxon>eudicotyledons</taxon>
        <taxon>Gunneridae</taxon>
        <taxon>Pentapetalae</taxon>
        <taxon>asterids</taxon>
        <taxon>campanulids</taxon>
        <taxon>Asterales</taxon>
        <taxon>Asteraceae</taxon>
        <taxon>Asteroideae</taxon>
        <taxon>Heliantheae alliance</taxon>
        <taxon>Heliantheae</taxon>
        <taxon>Helianthus</taxon>
    </lineage>
</organism>
<sequence length="148" mass="16217">MEQTFIMIKPDGVQRGLVGEIIGRFEKKGFTLKGLKLLTVDQAFAEKHYADLSAKPFFNGLVEYIISGPVVAMVWEGKNVVTTGRKIIGATNPAESPPGTIRGDFAIDIGRNVIHGSDAVESAKKEIGLWFPEGVANWSSSLHPWIYE</sequence>
<evidence type="ECO:0000250" key="1"/>
<evidence type="ECO:0000305" key="2"/>